<comment type="similarity">
    <text evidence="1">Belongs to the bacterial ribosomal protein bL35 family.</text>
</comment>
<evidence type="ECO:0000255" key="1">
    <source>
        <dbReference type="HAMAP-Rule" id="MF_00514"/>
    </source>
</evidence>
<evidence type="ECO:0000305" key="2"/>
<reference key="1">
    <citation type="journal article" date="2007" name="J. Bacteriol.">
        <title>Genome sequence and analysis of the soil cellulolytic actinomycete Thermobifida fusca YX.</title>
        <authorList>
            <person name="Lykidis A."/>
            <person name="Mavromatis K."/>
            <person name="Ivanova N."/>
            <person name="Anderson I."/>
            <person name="Land M."/>
            <person name="DiBartolo G."/>
            <person name="Martinez M."/>
            <person name="Lapidus A."/>
            <person name="Lucas S."/>
            <person name="Copeland A."/>
            <person name="Richardson P."/>
            <person name="Wilson D.B."/>
            <person name="Kyrpides N."/>
        </authorList>
    </citation>
    <scope>NUCLEOTIDE SEQUENCE [LARGE SCALE GENOMIC DNA]</scope>
    <source>
        <strain>YX</strain>
    </source>
</reference>
<sequence>MPKNKSHSGASRRFRVTGTGKIMRRRTNKNHLLEHKPSKRTRRLSVDVRVSPADARKIRKLLG</sequence>
<feature type="chain" id="PRO_0000258777" description="Large ribosomal subunit protein bL35">
    <location>
        <begin position="1"/>
        <end position="63"/>
    </location>
</feature>
<dbReference type="EMBL" id="CP000088">
    <property type="protein sequence ID" value="AAZ56098.1"/>
    <property type="molecule type" value="Genomic_DNA"/>
</dbReference>
<dbReference type="RefSeq" id="WP_011292488.1">
    <property type="nucleotide sequence ID" value="NC_007333.1"/>
</dbReference>
<dbReference type="SMR" id="Q47N71"/>
<dbReference type="STRING" id="269800.Tfu_2065"/>
<dbReference type="KEGG" id="tfu:Tfu_2065"/>
<dbReference type="eggNOG" id="COG0291">
    <property type="taxonomic scope" value="Bacteria"/>
</dbReference>
<dbReference type="HOGENOM" id="CLU_169643_4_2_11"/>
<dbReference type="OrthoDB" id="9804851at2"/>
<dbReference type="GO" id="GO:0022625">
    <property type="term" value="C:cytosolic large ribosomal subunit"/>
    <property type="evidence" value="ECO:0007669"/>
    <property type="project" value="TreeGrafter"/>
</dbReference>
<dbReference type="GO" id="GO:0003735">
    <property type="term" value="F:structural constituent of ribosome"/>
    <property type="evidence" value="ECO:0007669"/>
    <property type="project" value="InterPro"/>
</dbReference>
<dbReference type="GO" id="GO:0006412">
    <property type="term" value="P:translation"/>
    <property type="evidence" value="ECO:0007669"/>
    <property type="project" value="UniProtKB-UniRule"/>
</dbReference>
<dbReference type="FunFam" id="4.10.410.60:FF:000001">
    <property type="entry name" value="50S ribosomal protein L35"/>
    <property type="match status" value="1"/>
</dbReference>
<dbReference type="Gene3D" id="4.10.410.60">
    <property type="match status" value="1"/>
</dbReference>
<dbReference type="HAMAP" id="MF_00514">
    <property type="entry name" value="Ribosomal_bL35"/>
    <property type="match status" value="1"/>
</dbReference>
<dbReference type="InterPro" id="IPR001706">
    <property type="entry name" value="Ribosomal_bL35"/>
</dbReference>
<dbReference type="InterPro" id="IPR021137">
    <property type="entry name" value="Ribosomal_bL35-like"/>
</dbReference>
<dbReference type="InterPro" id="IPR018265">
    <property type="entry name" value="Ribosomal_bL35_CS"/>
</dbReference>
<dbReference type="InterPro" id="IPR037229">
    <property type="entry name" value="Ribosomal_bL35_sf"/>
</dbReference>
<dbReference type="NCBIfam" id="TIGR00001">
    <property type="entry name" value="rpmI_bact"/>
    <property type="match status" value="1"/>
</dbReference>
<dbReference type="PANTHER" id="PTHR33343">
    <property type="entry name" value="54S RIBOSOMAL PROTEIN BL35M"/>
    <property type="match status" value="1"/>
</dbReference>
<dbReference type="PANTHER" id="PTHR33343:SF1">
    <property type="entry name" value="LARGE RIBOSOMAL SUBUNIT PROTEIN BL35M"/>
    <property type="match status" value="1"/>
</dbReference>
<dbReference type="Pfam" id="PF01632">
    <property type="entry name" value="Ribosomal_L35p"/>
    <property type="match status" value="1"/>
</dbReference>
<dbReference type="PRINTS" id="PR00064">
    <property type="entry name" value="RIBOSOMALL35"/>
</dbReference>
<dbReference type="SUPFAM" id="SSF143034">
    <property type="entry name" value="L35p-like"/>
    <property type="match status" value="1"/>
</dbReference>
<dbReference type="PROSITE" id="PS00936">
    <property type="entry name" value="RIBOSOMAL_L35"/>
    <property type="match status" value="1"/>
</dbReference>
<accession>Q47N71</accession>
<gene>
    <name evidence="1" type="primary">rpmI</name>
    <name type="ordered locus">Tfu_2065</name>
</gene>
<name>RL35_THEFY</name>
<organism>
    <name type="scientific">Thermobifida fusca (strain YX)</name>
    <dbReference type="NCBI Taxonomy" id="269800"/>
    <lineage>
        <taxon>Bacteria</taxon>
        <taxon>Bacillati</taxon>
        <taxon>Actinomycetota</taxon>
        <taxon>Actinomycetes</taxon>
        <taxon>Streptosporangiales</taxon>
        <taxon>Nocardiopsidaceae</taxon>
        <taxon>Thermobifida</taxon>
    </lineage>
</organism>
<keyword id="KW-0687">Ribonucleoprotein</keyword>
<keyword id="KW-0689">Ribosomal protein</keyword>
<protein>
    <recommendedName>
        <fullName evidence="1">Large ribosomal subunit protein bL35</fullName>
    </recommendedName>
    <alternativeName>
        <fullName evidence="2">50S ribosomal protein L35</fullName>
    </alternativeName>
</protein>
<proteinExistence type="inferred from homology"/>